<protein>
    <recommendedName>
        <fullName evidence="1">Aspartyl/glutamyl-tRNA(Asn/Gln) amidotransferase subunit C</fullName>
        <shortName evidence="1">Asp/Glu-ADT subunit C</shortName>
        <ecNumber evidence="1">6.3.5.-</ecNumber>
    </recommendedName>
</protein>
<proteinExistence type="inferred from homology"/>
<accession>A8FKI5</accession>
<evidence type="ECO:0000255" key="1">
    <source>
        <dbReference type="HAMAP-Rule" id="MF_00122"/>
    </source>
</evidence>
<keyword id="KW-0067">ATP-binding</keyword>
<keyword id="KW-0436">Ligase</keyword>
<keyword id="KW-0547">Nucleotide-binding</keyword>
<keyword id="KW-0648">Protein biosynthesis</keyword>
<comment type="function">
    <text evidence="1">Allows the formation of correctly charged Asn-tRNA(Asn) or Gln-tRNA(Gln) through the transamidation of misacylated Asp-tRNA(Asn) or Glu-tRNA(Gln) in organisms which lack either or both of asparaginyl-tRNA or glutaminyl-tRNA synthetases. The reaction takes place in the presence of glutamine and ATP through an activated phospho-Asp-tRNA(Asn) or phospho-Glu-tRNA(Gln).</text>
</comment>
<comment type="catalytic activity">
    <reaction evidence="1">
        <text>L-glutamyl-tRNA(Gln) + L-glutamine + ATP + H2O = L-glutaminyl-tRNA(Gln) + L-glutamate + ADP + phosphate + H(+)</text>
        <dbReference type="Rhea" id="RHEA:17521"/>
        <dbReference type="Rhea" id="RHEA-COMP:9681"/>
        <dbReference type="Rhea" id="RHEA-COMP:9684"/>
        <dbReference type="ChEBI" id="CHEBI:15377"/>
        <dbReference type="ChEBI" id="CHEBI:15378"/>
        <dbReference type="ChEBI" id="CHEBI:29985"/>
        <dbReference type="ChEBI" id="CHEBI:30616"/>
        <dbReference type="ChEBI" id="CHEBI:43474"/>
        <dbReference type="ChEBI" id="CHEBI:58359"/>
        <dbReference type="ChEBI" id="CHEBI:78520"/>
        <dbReference type="ChEBI" id="CHEBI:78521"/>
        <dbReference type="ChEBI" id="CHEBI:456216"/>
    </reaction>
</comment>
<comment type="catalytic activity">
    <reaction evidence="1">
        <text>L-aspartyl-tRNA(Asn) + L-glutamine + ATP + H2O = L-asparaginyl-tRNA(Asn) + L-glutamate + ADP + phosphate + 2 H(+)</text>
        <dbReference type="Rhea" id="RHEA:14513"/>
        <dbReference type="Rhea" id="RHEA-COMP:9674"/>
        <dbReference type="Rhea" id="RHEA-COMP:9677"/>
        <dbReference type="ChEBI" id="CHEBI:15377"/>
        <dbReference type="ChEBI" id="CHEBI:15378"/>
        <dbReference type="ChEBI" id="CHEBI:29985"/>
        <dbReference type="ChEBI" id="CHEBI:30616"/>
        <dbReference type="ChEBI" id="CHEBI:43474"/>
        <dbReference type="ChEBI" id="CHEBI:58359"/>
        <dbReference type="ChEBI" id="CHEBI:78515"/>
        <dbReference type="ChEBI" id="CHEBI:78516"/>
        <dbReference type="ChEBI" id="CHEBI:456216"/>
    </reaction>
</comment>
<comment type="subunit">
    <text evidence="1">Heterotrimer of A, B and C subunits.</text>
</comment>
<comment type="similarity">
    <text evidence="1">Belongs to the GatC family.</text>
</comment>
<gene>
    <name evidence="1" type="primary">gatC</name>
    <name type="ordered locus">C8J_0373</name>
</gene>
<name>GATC_CAMJ8</name>
<organism>
    <name type="scientific">Campylobacter jejuni subsp. jejuni serotype O:6 (strain 81116 / NCTC 11828)</name>
    <dbReference type="NCBI Taxonomy" id="407148"/>
    <lineage>
        <taxon>Bacteria</taxon>
        <taxon>Pseudomonadati</taxon>
        <taxon>Campylobacterota</taxon>
        <taxon>Epsilonproteobacteria</taxon>
        <taxon>Campylobacterales</taxon>
        <taxon>Campylobacteraceae</taxon>
        <taxon>Campylobacter</taxon>
    </lineage>
</organism>
<feature type="chain" id="PRO_1000071384" description="Aspartyl/glutamyl-tRNA(Asn/Gln) amidotransferase subunit C">
    <location>
        <begin position="1"/>
        <end position="94"/>
    </location>
</feature>
<dbReference type="EC" id="6.3.5.-" evidence="1"/>
<dbReference type="EMBL" id="CP000814">
    <property type="protein sequence ID" value="ABV51972.1"/>
    <property type="molecule type" value="Genomic_DNA"/>
</dbReference>
<dbReference type="RefSeq" id="WP_002854550.1">
    <property type="nucleotide sequence ID" value="NC_009839.1"/>
</dbReference>
<dbReference type="SMR" id="A8FKI5"/>
<dbReference type="KEGG" id="cju:C8J_0373"/>
<dbReference type="HOGENOM" id="CLU_105899_2_1_7"/>
<dbReference type="GO" id="GO:0050566">
    <property type="term" value="F:asparaginyl-tRNA synthase (glutamine-hydrolyzing) activity"/>
    <property type="evidence" value="ECO:0007669"/>
    <property type="project" value="RHEA"/>
</dbReference>
<dbReference type="GO" id="GO:0005524">
    <property type="term" value="F:ATP binding"/>
    <property type="evidence" value="ECO:0007669"/>
    <property type="project" value="UniProtKB-KW"/>
</dbReference>
<dbReference type="GO" id="GO:0050567">
    <property type="term" value="F:glutaminyl-tRNA synthase (glutamine-hydrolyzing) activity"/>
    <property type="evidence" value="ECO:0007669"/>
    <property type="project" value="UniProtKB-UniRule"/>
</dbReference>
<dbReference type="GO" id="GO:0070681">
    <property type="term" value="P:glutaminyl-tRNAGln biosynthesis via transamidation"/>
    <property type="evidence" value="ECO:0007669"/>
    <property type="project" value="TreeGrafter"/>
</dbReference>
<dbReference type="GO" id="GO:0006450">
    <property type="term" value="P:regulation of translational fidelity"/>
    <property type="evidence" value="ECO:0007669"/>
    <property type="project" value="InterPro"/>
</dbReference>
<dbReference type="GO" id="GO:0006412">
    <property type="term" value="P:translation"/>
    <property type="evidence" value="ECO:0007669"/>
    <property type="project" value="UniProtKB-UniRule"/>
</dbReference>
<dbReference type="Gene3D" id="1.10.20.60">
    <property type="entry name" value="Glu-tRNAGln amidotransferase C subunit, N-terminal domain"/>
    <property type="match status" value="1"/>
</dbReference>
<dbReference type="HAMAP" id="MF_00122">
    <property type="entry name" value="GatC"/>
    <property type="match status" value="1"/>
</dbReference>
<dbReference type="InterPro" id="IPR036113">
    <property type="entry name" value="Asp/Glu-ADT_sf_sub_c"/>
</dbReference>
<dbReference type="InterPro" id="IPR003837">
    <property type="entry name" value="GatC"/>
</dbReference>
<dbReference type="NCBIfam" id="TIGR00135">
    <property type="entry name" value="gatC"/>
    <property type="match status" value="1"/>
</dbReference>
<dbReference type="PANTHER" id="PTHR15004">
    <property type="entry name" value="GLUTAMYL-TRNA(GLN) AMIDOTRANSFERASE SUBUNIT C, MITOCHONDRIAL"/>
    <property type="match status" value="1"/>
</dbReference>
<dbReference type="PANTHER" id="PTHR15004:SF0">
    <property type="entry name" value="GLUTAMYL-TRNA(GLN) AMIDOTRANSFERASE SUBUNIT C, MITOCHONDRIAL"/>
    <property type="match status" value="1"/>
</dbReference>
<dbReference type="Pfam" id="PF02686">
    <property type="entry name" value="GatC"/>
    <property type="match status" value="1"/>
</dbReference>
<dbReference type="SUPFAM" id="SSF141000">
    <property type="entry name" value="Glu-tRNAGln amidotransferase C subunit"/>
    <property type="match status" value="1"/>
</dbReference>
<sequence length="94" mass="10717">MQIDEKLLSKLEKLSALQITKNRNETIVQLSEIVNFVEKLNELDLDSQEITVSTIKGGAPLRIDEIRNSNVIDEVLDCAPKKQEHFFVVPKIIE</sequence>
<reference key="1">
    <citation type="journal article" date="2007" name="J. Bacteriol.">
        <title>The complete genome sequence of Campylobacter jejuni strain 81116 (NCTC11828).</title>
        <authorList>
            <person name="Pearson B.M."/>
            <person name="Gaskin D.J.H."/>
            <person name="Segers R.P.A.M."/>
            <person name="Wells J.M."/>
            <person name="Nuijten P.J.M."/>
            <person name="van Vliet A.H.M."/>
        </authorList>
    </citation>
    <scope>NUCLEOTIDE SEQUENCE [LARGE SCALE GENOMIC DNA]</scope>
    <source>
        <strain>81116 / NCTC 11828</strain>
    </source>
</reference>